<gene>
    <name evidence="8" type="primary">eccA1</name>
    <name evidence="6" type="synonym">Ms3868</name>
    <name evidence="7" type="synonym">Sm3868</name>
    <name type="ordered locus">MSMEG_0059</name>
    <name type="ordered locus">MSMEI_0060</name>
</gene>
<evidence type="ECO:0000250" key="1">
    <source>
        <dbReference type="UniProtKB" id="B2HSU9"/>
    </source>
</evidence>
<evidence type="ECO:0000250" key="2">
    <source>
        <dbReference type="UniProtKB" id="P9WPH9"/>
    </source>
</evidence>
<evidence type="ECO:0000269" key="3">
    <source>
    </source>
</evidence>
<evidence type="ECO:0000269" key="4">
    <source>
    </source>
</evidence>
<evidence type="ECO:0000269" key="5">
    <source>
    </source>
</evidence>
<evidence type="ECO:0000303" key="6">
    <source>
    </source>
</evidence>
<evidence type="ECO:0000303" key="7">
    <source>
    </source>
</evidence>
<evidence type="ECO:0000303" key="8">
    <source>
    </source>
</evidence>
<evidence type="ECO:0000305" key="9"/>
<evidence type="ECO:0000305" key="10">
    <source>
    </source>
</evidence>
<evidence type="ECO:0000305" key="11">
    <source>
    </source>
</evidence>
<comment type="function">
    <text evidence="2 3 5">Part of the ESX-1 / type VII specialized secretion system (T7SS), which exports several proteins including EsxA and EsxB (PubMed:15687187). Plays a role in DNA conjugation, in both donor and recipient strains (PubMed:15314236, PubMed:18554329). EccA1 exhibits ATPase activity and may provide energy for the export of ESX-1 substrates (By similarity).</text>
</comment>
<comment type="subunit">
    <text evidence="2 11">Part of the ESX-1 / type VII secretion system (T7SS), which is composed of cytosolic and membrane components (By similarity).</text>
</comment>
<comment type="subcellular location">
    <subcellularLocation>
        <location evidence="1">Cytoplasm</location>
    </subcellularLocation>
</comment>
<comment type="disruption phenotype">
    <text evidence="3 4 5">Increases efficiency of DNA conjugation when disrupted in donor strain (PubMed:15314236). Loss of DNA conjugation when disrupted in recipient strain (PubMed:18554329) No effect on secretion of EsxA or EsxB (PubMed:15687187). EsxB secretion was not seen in this disruption in strain MDK8 (PubMed:18554329).</text>
</comment>
<comment type="miscellaneous">
    <text evidence="10">DNA conjugation in M.smegmatis is unidirectional with distinct donor and recipient strains; mc(2)155 is a donor strain while MKD8 is a recipient strain. Mutations in a donor strain that alter DNA transfer do not always alter DNA transfer in a recipient strain.</text>
</comment>
<comment type="similarity">
    <text evidence="9">Belongs to the CbxX/CfxQ family.</text>
</comment>
<comment type="sequence caution" evidence="9">
    <conflict type="erroneous initiation">
        <sequence resource="EMBL-CDS" id="AFP36542"/>
    </conflict>
    <text>Extended N-terminus.</text>
</comment>
<keyword id="KW-0067">ATP-binding</keyword>
<keyword id="KW-0963">Cytoplasm</keyword>
<keyword id="KW-0547">Nucleotide-binding</keyword>
<keyword id="KW-1185">Reference proteome</keyword>
<keyword id="KW-0813">Transport</keyword>
<dbReference type="EMBL" id="CP000480">
    <property type="protein sequence ID" value="ABK74506.1"/>
    <property type="molecule type" value="Genomic_DNA"/>
</dbReference>
<dbReference type="EMBL" id="CP001663">
    <property type="protein sequence ID" value="AFP36542.1"/>
    <property type="status" value="ALT_INIT"/>
    <property type="molecule type" value="Genomic_DNA"/>
</dbReference>
<dbReference type="RefSeq" id="WP_003891386.1">
    <property type="nucleotide sequence ID" value="NZ_SIJM01000058.1"/>
</dbReference>
<dbReference type="RefSeq" id="YP_884477.1">
    <property type="nucleotide sequence ID" value="NC_008596.1"/>
</dbReference>
<dbReference type="SMR" id="A0QNI9"/>
<dbReference type="STRING" id="246196.MSMEG_0059"/>
<dbReference type="TCDB" id="3.A.24.5.1">
    <property type="family name" value="the type vii or esx protein secretion system (t7ss) family"/>
</dbReference>
<dbReference type="PaxDb" id="246196-MSMEI_0060"/>
<dbReference type="GeneID" id="93454984"/>
<dbReference type="KEGG" id="msb:LJ00_00295"/>
<dbReference type="KEGG" id="msg:MSMEI_0060"/>
<dbReference type="KEGG" id="msm:MSMEG_0059"/>
<dbReference type="PATRIC" id="fig|246196.19.peg.57"/>
<dbReference type="eggNOG" id="COG0464">
    <property type="taxonomic scope" value="Bacteria"/>
</dbReference>
<dbReference type="OrthoDB" id="9806903at2"/>
<dbReference type="Proteomes" id="UP000000757">
    <property type="component" value="Chromosome"/>
</dbReference>
<dbReference type="Proteomes" id="UP000006158">
    <property type="component" value="Chromosome"/>
</dbReference>
<dbReference type="GO" id="GO:0005737">
    <property type="term" value="C:cytoplasm"/>
    <property type="evidence" value="ECO:0007669"/>
    <property type="project" value="UniProtKB-SubCell"/>
</dbReference>
<dbReference type="GO" id="GO:0005524">
    <property type="term" value="F:ATP binding"/>
    <property type="evidence" value="ECO:0007669"/>
    <property type="project" value="UniProtKB-KW"/>
</dbReference>
<dbReference type="GO" id="GO:0016887">
    <property type="term" value="F:ATP hydrolysis activity"/>
    <property type="evidence" value="ECO:0007669"/>
    <property type="project" value="InterPro"/>
</dbReference>
<dbReference type="CDD" id="cd00009">
    <property type="entry name" value="AAA"/>
    <property type="match status" value="1"/>
</dbReference>
<dbReference type="FunFam" id="3.40.50.300:FF:000216">
    <property type="entry name" value="Type VII secretion ATPase EccA"/>
    <property type="match status" value="1"/>
</dbReference>
<dbReference type="Gene3D" id="1.10.8.60">
    <property type="match status" value="1"/>
</dbReference>
<dbReference type="Gene3D" id="3.40.50.300">
    <property type="entry name" value="P-loop containing nucleotide triphosphate hydrolases"/>
    <property type="match status" value="1"/>
</dbReference>
<dbReference type="Gene3D" id="1.25.40.10">
    <property type="entry name" value="Tetratricopeptide repeat domain"/>
    <property type="match status" value="1"/>
</dbReference>
<dbReference type="InterPro" id="IPR003593">
    <property type="entry name" value="AAA+_ATPase"/>
</dbReference>
<dbReference type="InterPro" id="IPR003959">
    <property type="entry name" value="ATPase_AAA_core"/>
</dbReference>
<dbReference type="InterPro" id="IPR000641">
    <property type="entry name" value="CbxX/CfxQ"/>
</dbReference>
<dbReference type="InterPro" id="IPR050773">
    <property type="entry name" value="CbxX/CfxQ_RuBisCO_ESX"/>
</dbReference>
<dbReference type="InterPro" id="IPR027417">
    <property type="entry name" value="P-loop_NTPase"/>
</dbReference>
<dbReference type="InterPro" id="IPR023835">
    <property type="entry name" value="T7SS_EccA"/>
</dbReference>
<dbReference type="InterPro" id="IPR049078">
    <property type="entry name" value="T7SS_EccA1-like_N"/>
</dbReference>
<dbReference type="InterPro" id="IPR011990">
    <property type="entry name" value="TPR-like_helical_dom_sf"/>
</dbReference>
<dbReference type="NCBIfam" id="TIGR03922">
    <property type="entry name" value="T7SS_EccA"/>
    <property type="match status" value="1"/>
</dbReference>
<dbReference type="PANTHER" id="PTHR43392">
    <property type="entry name" value="AAA-TYPE ATPASE FAMILY PROTEIN / ANKYRIN REPEAT FAMILY PROTEIN"/>
    <property type="match status" value="1"/>
</dbReference>
<dbReference type="PANTHER" id="PTHR43392:SF2">
    <property type="entry name" value="AAA-TYPE ATPASE FAMILY PROTEIN _ ANKYRIN REPEAT FAMILY PROTEIN"/>
    <property type="match status" value="1"/>
</dbReference>
<dbReference type="Pfam" id="PF00004">
    <property type="entry name" value="AAA"/>
    <property type="match status" value="1"/>
</dbReference>
<dbReference type="Pfam" id="PF21545">
    <property type="entry name" value="T7SS_EccA1_N"/>
    <property type="match status" value="1"/>
</dbReference>
<dbReference type="PRINTS" id="PR00819">
    <property type="entry name" value="CBXCFQXSUPER"/>
</dbReference>
<dbReference type="SMART" id="SM00382">
    <property type="entry name" value="AAA"/>
    <property type="match status" value="1"/>
</dbReference>
<dbReference type="SUPFAM" id="SSF52540">
    <property type="entry name" value="P-loop containing nucleoside triphosphate hydrolases"/>
    <property type="match status" value="1"/>
</dbReference>
<reference key="1">
    <citation type="submission" date="2006-10" db="EMBL/GenBank/DDBJ databases">
        <authorList>
            <person name="Fleischmann R.D."/>
            <person name="Dodson R.J."/>
            <person name="Haft D.H."/>
            <person name="Merkel J.S."/>
            <person name="Nelson W.C."/>
            <person name="Fraser C.M."/>
        </authorList>
    </citation>
    <scope>NUCLEOTIDE SEQUENCE [LARGE SCALE GENOMIC DNA]</scope>
    <source>
        <strain>ATCC 700084 / mc(2)155</strain>
    </source>
</reference>
<reference key="2">
    <citation type="journal article" date="2007" name="Genome Biol.">
        <title>Interrupted coding sequences in Mycobacterium smegmatis: authentic mutations or sequencing errors?</title>
        <authorList>
            <person name="Deshayes C."/>
            <person name="Perrodou E."/>
            <person name="Gallien S."/>
            <person name="Euphrasie D."/>
            <person name="Schaeffer C."/>
            <person name="Van-Dorsselaer A."/>
            <person name="Poch O."/>
            <person name="Lecompte O."/>
            <person name="Reyrat J.-M."/>
        </authorList>
    </citation>
    <scope>NUCLEOTIDE SEQUENCE [LARGE SCALE GENOMIC DNA]</scope>
    <source>
        <strain>ATCC 700084 / mc(2)155</strain>
    </source>
</reference>
<reference key="3">
    <citation type="journal article" date="2009" name="Genome Res.">
        <title>Ortho-proteogenomics: multiple proteomes investigation through orthology and a new MS-based protocol.</title>
        <authorList>
            <person name="Gallien S."/>
            <person name="Perrodou E."/>
            <person name="Carapito C."/>
            <person name="Deshayes C."/>
            <person name="Reyrat J.-M."/>
            <person name="Van Dorsselaer A."/>
            <person name="Poch O."/>
            <person name="Schaeffer C."/>
            <person name="Lecompte O."/>
        </authorList>
    </citation>
    <scope>NUCLEOTIDE SEQUENCE [LARGE SCALE GENOMIC DNA]</scope>
    <source>
        <strain>ATCC 700084 / mc(2)155</strain>
    </source>
</reference>
<reference key="4">
    <citation type="journal article" date="2004" name="Proc. Natl. Acad. Sci. U.S.A.">
        <title>The RD1 virulence locus of Mycobacterium tuberculosis regulates DNA transfer in Mycobacterium smegmatis.</title>
        <authorList>
            <person name="Flint J.L."/>
            <person name="Kowalski J.C."/>
            <person name="Karnati P.K."/>
            <person name="Derbyshire K.M."/>
        </authorList>
    </citation>
    <scope>FUNCTION</scope>
    <scope>DISRUPTION PHENOTYPE</scope>
    <source>
        <strain>ATCC 700084 / mc(2)155</strain>
    </source>
</reference>
<reference key="5">
    <citation type="journal article" date="2005" name="J. Bacteriol.">
        <title>A protein secretion pathway critical for Mycobacterium tuberculosis virulence is conserved and functional in Mycobacterium smegmatis.</title>
        <authorList>
            <person name="Converse S.E."/>
            <person name="Cox J.S."/>
        </authorList>
    </citation>
    <scope>DISRUPTION PHENOTYPE</scope>
    <source>
        <strain>ATCC 700084 / mc(2)155</strain>
    </source>
</reference>
<reference key="6">
    <citation type="journal article" date="2008" name="Mol. Microbiol.">
        <title>The specialized secretory apparatus ESX-1 is essential for DNA transfer in Mycobacterium smegmatis.</title>
        <authorList>
            <person name="Coros A."/>
            <person name="Callahan B."/>
            <person name="Battaglioli E."/>
            <person name="Derbyshire K.M."/>
        </authorList>
    </citation>
    <scope>FUNCTION</scope>
    <scope>DISRUPTION PHENOTYPE</scope>
    <source>
        <strain>MKD8</strain>
    </source>
</reference>
<reference key="7">
    <citation type="journal article" date="2009" name="PLoS Pathog.">
        <title>Systematic genetic nomenclature for type VII secretion systems.</title>
        <authorList>
            <person name="Bitter W."/>
            <person name="Houben E.N."/>
            <person name="Bottai D."/>
            <person name="Brodin P."/>
            <person name="Brown E.J."/>
            <person name="Cox J.S."/>
            <person name="Derbyshire K."/>
            <person name="Fortune S.M."/>
            <person name="Gao L.Y."/>
            <person name="Liu J."/>
            <person name="Gey van Pittius N.C."/>
            <person name="Pym A.S."/>
            <person name="Rubin E.J."/>
            <person name="Sherman D.R."/>
            <person name="Cole S.T."/>
            <person name="Brosch R."/>
        </authorList>
    </citation>
    <scope>NOMENCLATURE</scope>
</reference>
<accession>A0QNI9</accession>
<accession>I7FVG3</accession>
<organism>
    <name type="scientific">Mycolicibacterium smegmatis (strain ATCC 700084 / mc(2)155)</name>
    <name type="common">Mycobacterium smegmatis</name>
    <dbReference type="NCBI Taxonomy" id="246196"/>
    <lineage>
        <taxon>Bacteria</taxon>
        <taxon>Bacillati</taxon>
        <taxon>Actinomycetota</taxon>
        <taxon>Actinomycetes</taxon>
        <taxon>Mycobacteriales</taxon>
        <taxon>Mycobacteriaceae</taxon>
        <taxon>Mycolicibacterium</taxon>
    </lineage>
</organism>
<protein>
    <recommendedName>
        <fullName evidence="8">ESX-1 secretion system protein EccA1</fullName>
    </recommendedName>
    <alternativeName>
        <fullName evidence="8">ESX conserved component A1</fullName>
    </alternativeName>
    <alternativeName>
        <fullName evidence="9">Type VII secretion system protein EccA1</fullName>
        <shortName evidence="9">T7SS protein EccA1</shortName>
    </alternativeName>
</protein>
<feature type="chain" id="PRO_0000438310" description="ESX-1 secretion system protein EccA1">
    <location>
        <begin position="1"/>
        <end position="574"/>
    </location>
</feature>
<feature type="binding site" evidence="9">
    <location>
        <begin position="335"/>
        <end position="342"/>
    </location>
    <ligand>
        <name>ATP</name>
        <dbReference type="ChEBI" id="CHEBI:30616"/>
    </ligand>
</feature>
<name>ECCA1_MYCS2</name>
<proteinExistence type="inferred from homology"/>
<sequence length="574" mass="62148">MVNHLAGMFGSAVGMMSNSRARALEIFTEITNYDESACDAWVGRIGCGDTDRVTLFRAWYSRSNFGQLAGAAEISMNGVGARIPIGGIYSRDITYPINSPLAITMGFAVHEASEGNYTDAMEALEDAPAAGSEHLVSWVRAVIYGAGQRWTEVIDQVRGAERWPDKFLAAAAGVAHGVAAANLGLFTEADRRLTEANDTPVAQACAPVIAWYLAMARRSQGNEESAQVLLEWLQANFPEPKVTAALRDPAYRLETTTAEKIAARSDPWDPSSVVADTSARDKLLVEAQAELDRQIGLGRVKEQIEAYRAATQMARIRAARGMKVAQTSKHMIFAGPPGTGKTTIARVVANILAGLGVIAEPKLIETSRKDFVAEYEGQSAVKTSKTIDRALGGVLFIDEAYTLVQERNGQTDPFGAEALDTLLARMENDRDRLVVIIAGYSNDIDRLLEVNDGLRSRFATRIEFDSYSPDEIVEISKVIATANDSRLDDTAAKRVLEAATTLSQRSLNGKPALDIAGNGRYARQLVEAGEQNRDMRLARSLDFDSLGVDQLSEINGDDMAAAIASVHSRLNIGE</sequence>